<accession>Q041Y0</accession>
<dbReference type="EC" id="2.5.1.75" evidence="1"/>
<dbReference type="EMBL" id="CP000413">
    <property type="protein sequence ID" value="ABJ60742.1"/>
    <property type="molecule type" value="Genomic_DNA"/>
</dbReference>
<dbReference type="SMR" id="Q041Y0"/>
<dbReference type="KEGG" id="lga:LGAS_1380"/>
<dbReference type="HOGENOM" id="CLU_032616_0_1_9"/>
<dbReference type="Proteomes" id="UP000000664">
    <property type="component" value="Chromosome"/>
</dbReference>
<dbReference type="GO" id="GO:0005524">
    <property type="term" value="F:ATP binding"/>
    <property type="evidence" value="ECO:0007669"/>
    <property type="project" value="UniProtKB-UniRule"/>
</dbReference>
<dbReference type="GO" id="GO:0052381">
    <property type="term" value="F:tRNA dimethylallyltransferase activity"/>
    <property type="evidence" value="ECO:0007669"/>
    <property type="project" value="UniProtKB-UniRule"/>
</dbReference>
<dbReference type="GO" id="GO:0006400">
    <property type="term" value="P:tRNA modification"/>
    <property type="evidence" value="ECO:0007669"/>
    <property type="project" value="TreeGrafter"/>
</dbReference>
<dbReference type="Gene3D" id="1.10.20.140">
    <property type="match status" value="1"/>
</dbReference>
<dbReference type="Gene3D" id="3.40.50.300">
    <property type="entry name" value="P-loop containing nucleotide triphosphate hydrolases"/>
    <property type="match status" value="1"/>
</dbReference>
<dbReference type="HAMAP" id="MF_00185">
    <property type="entry name" value="IPP_trans"/>
    <property type="match status" value="1"/>
</dbReference>
<dbReference type="InterPro" id="IPR039657">
    <property type="entry name" value="Dimethylallyltransferase"/>
</dbReference>
<dbReference type="InterPro" id="IPR008144">
    <property type="entry name" value="Guanylate_kin-like_dom"/>
</dbReference>
<dbReference type="InterPro" id="IPR018022">
    <property type="entry name" value="IPT"/>
</dbReference>
<dbReference type="InterPro" id="IPR027417">
    <property type="entry name" value="P-loop_NTPase"/>
</dbReference>
<dbReference type="NCBIfam" id="TIGR00174">
    <property type="entry name" value="miaA"/>
    <property type="match status" value="1"/>
</dbReference>
<dbReference type="PANTHER" id="PTHR11088">
    <property type="entry name" value="TRNA DIMETHYLALLYLTRANSFERASE"/>
    <property type="match status" value="1"/>
</dbReference>
<dbReference type="PANTHER" id="PTHR11088:SF60">
    <property type="entry name" value="TRNA DIMETHYLALLYLTRANSFERASE"/>
    <property type="match status" value="1"/>
</dbReference>
<dbReference type="Pfam" id="PF01715">
    <property type="entry name" value="IPPT"/>
    <property type="match status" value="1"/>
</dbReference>
<dbReference type="SUPFAM" id="SSF52540">
    <property type="entry name" value="P-loop containing nucleoside triphosphate hydrolases"/>
    <property type="match status" value="2"/>
</dbReference>
<comment type="function">
    <text evidence="1">Catalyzes the transfer of a dimethylallyl group onto the adenine at position 37 in tRNAs that read codons beginning with uridine, leading to the formation of N6-(dimethylallyl)adenosine (i(6)A).</text>
</comment>
<comment type="catalytic activity">
    <reaction evidence="1">
        <text>adenosine(37) in tRNA + dimethylallyl diphosphate = N(6)-dimethylallyladenosine(37) in tRNA + diphosphate</text>
        <dbReference type="Rhea" id="RHEA:26482"/>
        <dbReference type="Rhea" id="RHEA-COMP:10162"/>
        <dbReference type="Rhea" id="RHEA-COMP:10375"/>
        <dbReference type="ChEBI" id="CHEBI:33019"/>
        <dbReference type="ChEBI" id="CHEBI:57623"/>
        <dbReference type="ChEBI" id="CHEBI:74411"/>
        <dbReference type="ChEBI" id="CHEBI:74415"/>
        <dbReference type="EC" id="2.5.1.75"/>
    </reaction>
</comment>
<comment type="cofactor">
    <cofactor evidence="1">
        <name>Mg(2+)</name>
        <dbReference type="ChEBI" id="CHEBI:18420"/>
    </cofactor>
</comment>
<comment type="subunit">
    <text evidence="1">Monomer.</text>
</comment>
<comment type="similarity">
    <text evidence="1">Belongs to the IPP transferase family.</text>
</comment>
<sequence>MFMQKIIVLIGPTGIGKTELALKLAPKINAEIISGDSMQIYQEVSIGTAKPTAEELRQVKHYLVNQRSIFDEYSVKDFVAEGKKAVNQIAAKGSIPLVVGGTGFYINALVNKLQLGEPGDYQTSVDSKWEKYLKDNGAEKLWQLLDEKDPVAAKKIAPQNSRRTLRALTVISRTGKLFSQQQAQISPRYDALIIGLNSNREEVYQRINKRVDKMMNAGLLKEAKFVYDNRAREHQAIQAIGYKEFFPYFSGEKTLDECVNKLKQASRKYAKRQLTYFKHQLSVVWLDPLQDKEVSERALNEIKSFLNK</sequence>
<gene>
    <name evidence="1" type="primary">miaA</name>
    <name type="ordered locus">LGAS_1380</name>
</gene>
<proteinExistence type="inferred from homology"/>
<protein>
    <recommendedName>
        <fullName evidence="1">tRNA dimethylallyltransferase</fullName>
        <ecNumber evidence="1">2.5.1.75</ecNumber>
    </recommendedName>
    <alternativeName>
        <fullName evidence="1">Dimethylallyl diphosphate:tRNA dimethylallyltransferase</fullName>
        <shortName evidence="1">DMAPP:tRNA dimethylallyltransferase</shortName>
        <shortName evidence="1">DMATase</shortName>
    </alternativeName>
    <alternativeName>
        <fullName evidence="1">Isopentenyl-diphosphate:tRNA isopentenyltransferase</fullName>
        <shortName evidence="1">IPP transferase</shortName>
        <shortName evidence="1">IPPT</shortName>
        <shortName evidence="1">IPTase</shortName>
    </alternativeName>
</protein>
<organism>
    <name type="scientific">Lactobacillus gasseri (strain ATCC 33323 / DSM 20243 / BCRC 14619 / CIP 102991 / JCM 1131 / KCTC 3163 / NCIMB 11718 / NCTC 13722 / AM63)</name>
    <dbReference type="NCBI Taxonomy" id="324831"/>
    <lineage>
        <taxon>Bacteria</taxon>
        <taxon>Bacillati</taxon>
        <taxon>Bacillota</taxon>
        <taxon>Bacilli</taxon>
        <taxon>Lactobacillales</taxon>
        <taxon>Lactobacillaceae</taxon>
        <taxon>Lactobacillus</taxon>
    </lineage>
</organism>
<name>MIAA_LACGA</name>
<evidence type="ECO:0000255" key="1">
    <source>
        <dbReference type="HAMAP-Rule" id="MF_00185"/>
    </source>
</evidence>
<reference key="1">
    <citation type="journal article" date="2006" name="Proc. Natl. Acad. Sci. U.S.A.">
        <title>Comparative genomics of the lactic acid bacteria.</title>
        <authorList>
            <person name="Makarova K.S."/>
            <person name="Slesarev A."/>
            <person name="Wolf Y.I."/>
            <person name="Sorokin A."/>
            <person name="Mirkin B."/>
            <person name="Koonin E.V."/>
            <person name="Pavlov A."/>
            <person name="Pavlova N."/>
            <person name="Karamychev V."/>
            <person name="Polouchine N."/>
            <person name="Shakhova V."/>
            <person name="Grigoriev I."/>
            <person name="Lou Y."/>
            <person name="Rohksar D."/>
            <person name="Lucas S."/>
            <person name="Huang K."/>
            <person name="Goodstein D.M."/>
            <person name="Hawkins T."/>
            <person name="Plengvidhya V."/>
            <person name="Welker D."/>
            <person name="Hughes J."/>
            <person name="Goh Y."/>
            <person name="Benson A."/>
            <person name="Baldwin K."/>
            <person name="Lee J.-H."/>
            <person name="Diaz-Muniz I."/>
            <person name="Dosti B."/>
            <person name="Smeianov V."/>
            <person name="Wechter W."/>
            <person name="Barabote R."/>
            <person name="Lorca G."/>
            <person name="Altermann E."/>
            <person name="Barrangou R."/>
            <person name="Ganesan B."/>
            <person name="Xie Y."/>
            <person name="Rawsthorne H."/>
            <person name="Tamir D."/>
            <person name="Parker C."/>
            <person name="Breidt F."/>
            <person name="Broadbent J.R."/>
            <person name="Hutkins R."/>
            <person name="O'Sullivan D."/>
            <person name="Steele J."/>
            <person name="Unlu G."/>
            <person name="Saier M.H. Jr."/>
            <person name="Klaenhammer T."/>
            <person name="Richardson P."/>
            <person name="Kozyavkin S."/>
            <person name="Weimer B.C."/>
            <person name="Mills D.A."/>
        </authorList>
    </citation>
    <scope>NUCLEOTIDE SEQUENCE [LARGE SCALE GENOMIC DNA]</scope>
    <source>
        <strain>ATCC 33323 / DSM 20243 / BCRC 14619 / CIP 102991 / JCM 1131 / KCTC 3163 / NCIMB 11718 / NCTC 13722 / AM63</strain>
    </source>
</reference>
<keyword id="KW-0067">ATP-binding</keyword>
<keyword id="KW-0460">Magnesium</keyword>
<keyword id="KW-0547">Nucleotide-binding</keyword>
<keyword id="KW-0808">Transferase</keyword>
<keyword id="KW-0819">tRNA processing</keyword>
<feature type="chain" id="PRO_0000377198" description="tRNA dimethylallyltransferase">
    <location>
        <begin position="1"/>
        <end position="308"/>
    </location>
</feature>
<feature type="region of interest" description="Interaction with substrate tRNA" evidence="1">
    <location>
        <begin position="36"/>
        <end position="39"/>
    </location>
</feature>
<feature type="binding site" evidence="1">
    <location>
        <begin position="11"/>
        <end position="18"/>
    </location>
    <ligand>
        <name>ATP</name>
        <dbReference type="ChEBI" id="CHEBI:30616"/>
    </ligand>
</feature>
<feature type="binding site" evidence="1">
    <location>
        <begin position="13"/>
        <end position="18"/>
    </location>
    <ligand>
        <name>substrate</name>
    </ligand>
</feature>
<feature type="site" description="Interaction with substrate tRNA" evidence="1">
    <location>
        <position position="102"/>
    </location>
</feature>